<organism>
    <name type="scientific">Zea mays</name>
    <name type="common">Maize</name>
    <dbReference type="NCBI Taxonomy" id="4577"/>
    <lineage>
        <taxon>Eukaryota</taxon>
        <taxon>Viridiplantae</taxon>
        <taxon>Streptophyta</taxon>
        <taxon>Embryophyta</taxon>
        <taxon>Tracheophyta</taxon>
        <taxon>Spermatophyta</taxon>
        <taxon>Magnoliopsida</taxon>
        <taxon>Liliopsida</taxon>
        <taxon>Poales</taxon>
        <taxon>Poaceae</taxon>
        <taxon>PACMAD clade</taxon>
        <taxon>Panicoideae</taxon>
        <taxon>Andropogonodae</taxon>
        <taxon>Andropogoneae</taxon>
        <taxon>Tripsacinae</taxon>
        <taxon>Zea</taxon>
    </lineage>
</organism>
<accession>P80626</accession>
<sequence>TQVTVEYVNEGGAMV</sequence>
<proteinExistence type="evidence at protein level"/>
<name>UC20_MAIZE</name>
<dbReference type="MaizeGDB" id="123952"/>
<dbReference type="InParanoid" id="P80626"/>
<dbReference type="Proteomes" id="UP000007305">
    <property type="component" value="Unplaced"/>
</dbReference>
<comment type="miscellaneous">
    <text>On the 2D-gel the determined pI of this unknown protein is: 6.1, its MW is: 45.3 kDa.</text>
</comment>
<feature type="chain" id="PRO_0000055516" description="Unknown protein from spot 445 of 2D-PAGE of etiolated coleoptile">
    <location>
        <begin position="1" status="less than"/>
        <end position="15" status="greater than"/>
    </location>
</feature>
<feature type="non-terminal residue">
    <location>
        <position position="1"/>
    </location>
</feature>
<feature type="non-terminal residue">
    <location>
        <position position="15"/>
    </location>
</feature>
<reference key="1">
    <citation type="journal article" date="1996" name="Theor. Appl. Genet.">
        <title>The maize two dimensional gel protein database: towards an integrated genome analysis program.</title>
        <authorList>
            <person name="Touzet P."/>
            <person name="Riccardi F."/>
            <person name="Morin C."/>
            <person name="Damerval C."/>
            <person name="Huet J.-C."/>
            <person name="Pernollet J.-C."/>
            <person name="Zivy M."/>
            <person name="de Vienne D."/>
        </authorList>
        <dbReference type="AGRICOLA" id="IND20551642"/>
    </citation>
    <scope>PROTEIN SEQUENCE</scope>
    <source>
        <tissue>Coleoptile</tissue>
    </source>
</reference>
<protein>
    <recommendedName>
        <fullName>Unknown protein from spot 445 of 2D-PAGE of etiolated coleoptile</fullName>
    </recommendedName>
</protein>
<keyword id="KW-0903">Direct protein sequencing</keyword>
<keyword id="KW-1185">Reference proteome</keyword>